<dbReference type="EC" id="2.7.8.7" evidence="1"/>
<dbReference type="EMBL" id="CP000148">
    <property type="protein sequence ID" value="ABB32113.1"/>
    <property type="molecule type" value="Genomic_DNA"/>
</dbReference>
<dbReference type="RefSeq" id="WP_004511960.1">
    <property type="nucleotide sequence ID" value="NC_007517.1"/>
</dbReference>
<dbReference type="SMR" id="Q39UG1"/>
<dbReference type="STRING" id="269799.Gmet_1884"/>
<dbReference type="KEGG" id="gme:Gmet_1884"/>
<dbReference type="eggNOG" id="COG0736">
    <property type="taxonomic scope" value="Bacteria"/>
</dbReference>
<dbReference type="HOGENOM" id="CLU_089696_3_1_7"/>
<dbReference type="Proteomes" id="UP000007073">
    <property type="component" value="Chromosome"/>
</dbReference>
<dbReference type="GO" id="GO:0005737">
    <property type="term" value="C:cytoplasm"/>
    <property type="evidence" value="ECO:0007669"/>
    <property type="project" value="UniProtKB-SubCell"/>
</dbReference>
<dbReference type="GO" id="GO:0008897">
    <property type="term" value="F:holo-[acyl-carrier-protein] synthase activity"/>
    <property type="evidence" value="ECO:0007669"/>
    <property type="project" value="UniProtKB-UniRule"/>
</dbReference>
<dbReference type="GO" id="GO:0000287">
    <property type="term" value="F:magnesium ion binding"/>
    <property type="evidence" value="ECO:0007669"/>
    <property type="project" value="UniProtKB-UniRule"/>
</dbReference>
<dbReference type="GO" id="GO:0006633">
    <property type="term" value="P:fatty acid biosynthetic process"/>
    <property type="evidence" value="ECO:0007669"/>
    <property type="project" value="UniProtKB-UniRule"/>
</dbReference>
<dbReference type="Gene3D" id="3.90.470.20">
    <property type="entry name" value="4'-phosphopantetheinyl transferase domain"/>
    <property type="match status" value="1"/>
</dbReference>
<dbReference type="HAMAP" id="MF_00101">
    <property type="entry name" value="AcpS"/>
    <property type="match status" value="1"/>
</dbReference>
<dbReference type="InterPro" id="IPR008278">
    <property type="entry name" value="4-PPantetheinyl_Trfase_dom"/>
</dbReference>
<dbReference type="InterPro" id="IPR037143">
    <property type="entry name" value="4-PPantetheinyl_Trfase_dom_sf"/>
</dbReference>
<dbReference type="InterPro" id="IPR002582">
    <property type="entry name" value="ACPS"/>
</dbReference>
<dbReference type="InterPro" id="IPR004568">
    <property type="entry name" value="Ppantetheine-prot_Trfase_dom"/>
</dbReference>
<dbReference type="NCBIfam" id="TIGR00516">
    <property type="entry name" value="acpS"/>
    <property type="match status" value="1"/>
</dbReference>
<dbReference type="NCBIfam" id="TIGR00556">
    <property type="entry name" value="pantethn_trn"/>
    <property type="match status" value="1"/>
</dbReference>
<dbReference type="NCBIfam" id="NF000832">
    <property type="entry name" value="PRK00070.3-2"/>
    <property type="match status" value="1"/>
</dbReference>
<dbReference type="NCBIfam" id="NF011250">
    <property type="entry name" value="PRK14656.1"/>
    <property type="match status" value="1"/>
</dbReference>
<dbReference type="Pfam" id="PF01648">
    <property type="entry name" value="ACPS"/>
    <property type="match status" value="1"/>
</dbReference>
<dbReference type="SUPFAM" id="SSF56214">
    <property type="entry name" value="4'-phosphopantetheinyl transferase"/>
    <property type="match status" value="1"/>
</dbReference>
<evidence type="ECO:0000255" key="1">
    <source>
        <dbReference type="HAMAP-Rule" id="MF_00101"/>
    </source>
</evidence>
<feature type="chain" id="PRO_0000228288" description="Holo-[acyl-carrier-protein] synthase">
    <location>
        <begin position="1"/>
        <end position="126"/>
    </location>
</feature>
<feature type="binding site" evidence="1">
    <location>
        <position position="8"/>
    </location>
    <ligand>
        <name>Mg(2+)</name>
        <dbReference type="ChEBI" id="CHEBI:18420"/>
    </ligand>
</feature>
<feature type="binding site" evidence="1">
    <location>
        <position position="57"/>
    </location>
    <ligand>
        <name>Mg(2+)</name>
        <dbReference type="ChEBI" id="CHEBI:18420"/>
    </ligand>
</feature>
<accession>Q39UG1</accession>
<keyword id="KW-0963">Cytoplasm</keyword>
<keyword id="KW-0275">Fatty acid biosynthesis</keyword>
<keyword id="KW-0276">Fatty acid metabolism</keyword>
<keyword id="KW-0444">Lipid biosynthesis</keyword>
<keyword id="KW-0443">Lipid metabolism</keyword>
<keyword id="KW-0460">Magnesium</keyword>
<keyword id="KW-0479">Metal-binding</keyword>
<keyword id="KW-1185">Reference proteome</keyword>
<keyword id="KW-0808">Transferase</keyword>
<gene>
    <name evidence="1" type="primary">acpS</name>
    <name type="ordered locus">Gmet_1884</name>
</gene>
<name>ACPS_GEOMG</name>
<proteinExistence type="inferred from homology"/>
<protein>
    <recommendedName>
        <fullName evidence="1">Holo-[acyl-carrier-protein] synthase</fullName>
        <shortName evidence="1">Holo-ACP synthase</shortName>
        <ecNumber evidence="1">2.7.8.7</ecNumber>
    </recommendedName>
    <alternativeName>
        <fullName evidence="1">4'-phosphopantetheinyl transferase AcpS</fullName>
    </alternativeName>
</protein>
<reference key="1">
    <citation type="journal article" date="2009" name="BMC Microbiol.">
        <title>The genome sequence of Geobacter metallireducens: features of metabolism, physiology and regulation common and dissimilar to Geobacter sulfurreducens.</title>
        <authorList>
            <person name="Aklujkar M."/>
            <person name="Krushkal J."/>
            <person name="DiBartolo G."/>
            <person name="Lapidus A."/>
            <person name="Land M.L."/>
            <person name="Lovley D.R."/>
        </authorList>
    </citation>
    <scope>NUCLEOTIDE SEQUENCE [LARGE SCALE GENOMIC DNA]</scope>
    <source>
        <strain>ATCC 53774 / DSM 7210 / GS-15</strain>
    </source>
</reference>
<organism>
    <name type="scientific">Geobacter metallireducens (strain ATCC 53774 / DSM 7210 / GS-15)</name>
    <dbReference type="NCBI Taxonomy" id="269799"/>
    <lineage>
        <taxon>Bacteria</taxon>
        <taxon>Pseudomonadati</taxon>
        <taxon>Thermodesulfobacteriota</taxon>
        <taxon>Desulfuromonadia</taxon>
        <taxon>Geobacterales</taxon>
        <taxon>Geobacteraceae</taxon>
        <taxon>Geobacter</taxon>
    </lineage>
</organism>
<sequence>MIFGTGIDIVDITRFERFLEERNTRLFERLFTIHEQEYCAGKAHSAQHYALRFAAKEAFLKACGLGLREGLTWHDVEVVNDSLGKPDLRLYGKAQQLFADMNLSKTFVSLSHDGNFAVAMVVLERV</sequence>
<comment type="function">
    <text evidence="1">Transfers the 4'-phosphopantetheine moiety from coenzyme A to a Ser of acyl-carrier-protein.</text>
</comment>
<comment type="catalytic activity">
    <reaction evidence="1">
        <text>apo-[ACP] + CoA = holo-[ACP] + adenosine 3',5'-bisphosphate + H(+)</text>
        <dbReference type="Rhea" id="RHEA:12068"/>
        <dbReference type="Rhea" id="RHEA-COMP:9685"/>
        <dbReference type="Rhea" id="RHEA-COMP:9690"/>
        <dbReference type="ChEBI" id="CHEBI:15378"/>
        <dbReference type="ChEBI" id="CHEBI:29999"/>
        <dbReference type="ChEBI" id="CHEBI:57287"/>
        <dbReference type="ChEBI" id="CHEBI:58343"/>
        <dbReference type="ChEBI" id="CHEBI:64479"/>
        <dbReference type="EC" id="2.7.8.7"/>
    </reaction>
</comment>
<comment type="cofactor">
    <cofactor evidence="1">
        <name>Mg(2+)</name>
        <dbReference type="ChEBI" id="CHEBI:18420"/>
    </cofactor>
</comment>
<comment type="subcellular location">
    <subcellularLocation>
        <location evidence="1">Cytoplasm</location>
    </subcellularLocation>
</comment>
<comment type="similarity">
    <text evidence="1">Belongs to the P-Pant transferase superfamily. AcpS family.</text>
</comment>